<organism>
    <name type="scientific">Salmonella dublin (strain CT_02021853)</name>
    <dbReference type="NCBI Taxonomy" id="439851"/>
    <lineage>
        <taxon>Bacteria</taxon>
        <taxon>Pseudomonadati</taxon>
        <taxon>Pseudomonadota</taxon>
        <taxon>Gammaproteobacteria</taxon>
        <taxon>Enterobacterales</taxon>
        <taxon>Enterobacteriaceae</taxon>
        <taxon>Salmonella</taxon>
    </lineage>
</organism>
<protein>
    <recommendedName>
        <fullName evidence="1">DnaA initiator-associating protein DiaA</fullName>
    </recommendedName>
</protein>
<sequence>MLERIKVCFTESIQTQIAAAEALPDAISRAAMTLVHSLLNGNKILCCGNGTSAANAQHFAASMINRFETERPSLPAIALNTDNVVLTAIANDRLHDEVYAKQVRALGHAGDVLLAISTRGNSRDIVKAVEAAVTRDMTIVALTGYDGGELAGLLGPQDVEIRIPSHHSARIQEMHMLTVNCLCDLIDNTLFPHQDD</sequence>
<dbReference type="EMBL" id="CP001144">
    <property type="protein sequence ID" value="ACH74200.1"/>
    <property type="molecule type" value="Genomic_DNA"/>
</dbReference>
<dbReference type="RefSeq" id="WP_000893481.1">
    <property type="nucleotide sequence ID" value="NC_011205.1"/>
</dbReference>
<dbReference type="SMR" id="B5FHZ4"/>
<dbReference type="GeneID" id="66757607"/>
<dbReference type="KEGG" id="sed:SeD_A3621"/>
<dbReference type="HOGENOM" id="CLU_080999_3_1_6"/>
<dbReference type="Proteomes" id="UP000008322">
    <property type="component" value="Chromosome"/>
</dbReference>
<dbReference type="GO" id="GO:0097367">
    <property type="term" value="F:carbohydrate derivative binding"/>
    <property type="evidence" value="ECO:0007669"/>
    <property type="project" value="InterPro"/>
</dbReference>
<dbReference type="GO" id="GO:1901135">
    <property type="term" value="P:carbohydrate derivative metabolic process"/>
    <property type="evidence" value="ECO:0007669"/>
    <property type="project" value="InterPro"/>
</dbReference>
<dbReference type="GO" id="GO:0006260">
    <property type="term" value="P:DNA replication"/>
    <property type="evidence" value="ECO:0007669"/>
    <property type="project" value="UniProtKB-UniRule"/>
</dbReference>
<dbReference type="CDD" id="cd05006">
    <property type="entry name" value="SIS_GmhA"/>
    <property type="match status" value="1"/>
</dbReference>
<dbReference type="FunFam" id="3.40.50.10490:FF:000006">
    <property type="entry name" value="DnaA initiator-associating protein DiaA"/>
    <property type="match status" value="1"/>
</dbReference>
<dbReference type="Gene3D" id="3.40.50.10490">
    <property type="entry name" value="Glucose-6-phosphate isomerase like protein, domain 1"/>
    <property type="match status" value="1"/>
</dbReference>
<dbReference type="HAMAP" id="MF_01157">
    <property type="entry name" value="SIS_DiaA"/>
    <property type="match status" value="1"/>
</dbReference>
<dbReference type="InterPro" id="IPR023070">
    <property type="entry name" value="DiaA"/>
</dbReference>
<dbReference type="InterPro" id="IPR035461">
    <property type="entry name" value="GmhA/DiaA"/>
</dbReference>
<dbReference type="InterPro" id="IPR001347">
    <property type="entry name" value="SIS_dom"/>
</dbReference>
<dbReference type="InterPro" id="IPR046348">
    <property type="entry name" value="SIS_dom_sf"/>
</dbReference>
<dbReference type="InterPro" id="IPR050099">
    <property type="entry name" value="SIS_GmhA/DiaA_subfam"/>
</dbReference>
<dbReference type="NCBIfam" id="NF008138">
    <property type="entry name" value="PRK10886.1"/>
    <property type="match status" value="1"/>
</dbReference>
<dbReference type="PANTHER" id="PTHR30390:SF6">
    <property type="entry name" value="DNAA INITIATOR-ASSOCIATING PROTEIN DIAA"/>
    <property type="match status" value="1"/>
</dbReference>
<dbReference type="PANTHER" id="PTHR30390">
    <property type="entry name" value="SEDOHEPTULOSE 7-PHOSPHATE ISOMERASE / DNAA INITIATOR-ASSOCIATING FACTOR FOR REPLICATION INITIATION"/>
    <property type="match status" value="1"/>
</dbReference>
<dbReference type="Pfam" id="PF13580">
    <property type="entry name" value="SIS_2"/>
    <property type="match status" value="1"/>
</dbReference>
<dbReference type="SUPFAM" id="SSF53697">
    <property type="entry name" value="SIS domain"/>
    <property type="match status" value="1"/>
</dbReference>
<dbReference type="PROSITE" id="PS51464">
    <property type="entry name" value="SIS"/>
    <property type="match status" value="1"/>
</dbReference>
<comment type="function">
    <text evidence="1">Required for the timely initiation of chromosomal replication via direct interactions with the DnaA initiator protein.</text>
</comment>
<comment type="subunit">
    <text evidence="1">Homotetramer; dimer of dimers.</text>
</comment>
<comment type="similarity">
    <text evidence="1">Belongs to the SIS family. DiaA subfamily.</text>
</comment>
<name>DIAA_SALDC</name>
<keyword id="KW-0235">DNA replication</keyword>
<evidence type="ECO:0000255" key="1">
    <source>
        <dbReference type="HAMAP-Rule" id="MF_01157"/>
    </source>
</evidence>
<reference key="1">
    <citation type="journal article" date="2011" name="J. Bacteriol.">
        <title>Comparative genomics of 28 Salmonella enterica isolates: evidence for CRISPR-mediated adaptive sublineage evolution.</title>
        <authorList>
            <person name="Fricke W.F."/>
            <person name="Mammel M.K."/>
            <person name="McDermott P.F."/>
            <person name="Tartera C."/>
            <person name="White D.G."/>
            <person name="Leclerc J.E."/>
            <person name="Ravel J."/>
            <person name="Cebula T.A."/>
        </authorList>
    </citation>
    <scope>NUCLEOTIDE SEQUENCE [LARGE SCALE GENOMIC DNA]</scope>
    <source>
        <strain>CT_02021853</strain>
    </source>
</reference>
<proteinExistence type="inferred from homology"/>
<gene>
    <name evidence="1" type="primary">diaA</name>
    <name type="ordered locus">SeD_A3621</name>
</gene>
<accession>B5FHZ4</accession>
<feature type="chain" id="PRO_1000137796" description="DnaA initiator-associating protein DiaA">
    <location>
        <begin position="1"/>
        <end position="196"/>
    </location>
</feature>
<feature type="domain" description="SIS" evidence="1">
    <location>
        <begin position="34"/>
        <end position="196"/>
    </location>
</feature>